<dbReference type="EC" id="5.3.3.2" evidence="1"/>
<dbReference type="EMBL" id="CP000780">
    <property type="protein sequence ID" value="ABS56725.1"/>
    <property type="molecule type" value="Genomic_DNA"/>
</dbReference>
<dbReference type="RefSeq" id="WP_012107785.1">
    <property type="nucleotide sequence ID" value="NC_009712.1"/>
</dbReference>
<dbReference type="SMR" id="A7IAG4"/>
<dbReference type="STRING" id="456442.Mboo_2211"/>
<dbReference type="GeneID" id="5411231"/>
<dbReference type="KEGG" id="mbn:Mboo_2211"/>
<dbReference type="eggNOG" id="arCOG00613">
    <property type="taxonomic scope" value="Archaea"/>
</dbReference>
<dbReference type="HOGENOM" id="CLU_065515_1_0_2"/>
<dbReference type="OrthoDB" id="371955at2157"/>
<dbReference type="Proteomes" id="UP000002408">
    <property type="component" value="Chromosome"/>
</dbReference>
<dbReference type="GO" id="GO:0005737">
    <property type="term" value="C:cytoplasm"/>
    <property type="evidence" value="ECO:0007669"/>
    <property type="project" value="UniProtKB-SubCell"/>
</dbReference>
<dbReference type="GO" id="GO:0010181">
    <property type="term" value="F:FMN binding"/>
    <property type="evidence" value="ECO:0007669"/>
    <property type="project" value="UniProtKB-UniRule"/>
</dbReference>
<dbReference type="GO" id="GO:0004452">
    <property type="term" value="F:isopentenyl-diphosphate delta-isomerase activity"/>
    <property type="evidence" value="ECO:0007669"/>
    <property type="project" value="UniProtKB-UniRule"/>
</dbReference>
<dbReference type="GO" id="GO:0000287">
    <property type="term" value="F:magnesium ion binding"/>
    <property type="evidence" value="ECO:0007669"/>
    <property type="project" value="UniProtKB-UniRule"/>
</dbReference>
<dbReference type="GO" id="GO:0070402">
    <property type="term" value="F:NADPH binding"/>
    <property type="evidence" value="ECO:0007669"/>
    <property type="project" value="UniProtKB-UniRule"/>
</dbReference>
<dbReference type="GO" id="GO:0016491">
    <property type="term" value="F:oxidoreductase activity"/>
    <property type="evidence" value="ECO:0007669"/>
    <property type="project" value="InterPro"/>
</dbReference>
<dbReference type="GO" id="GO:0008299">
    <property type="term" value="P:isoprenoid biosynthetic process"/>
    <property type="evidence" value="ECO:0007669"/>
    <property type="project" value="UniProtKB-UniRule"/>
</dbReference>
<dbReference type="CDD" id="cd02811">
    <property type="entry name" value="IDI-2_FMN"/>
    <property type="match status" value="1"/>
</dbReference>
<dbReference type="Gene3D" id="3.20.20.70">
    <property type="entry name" value="Aldolase class I"/>
    <property type="match status" value="1"/>
</dbReference>
<dbReference type="HAMAP" id="MF_00354">
    <property type="entry name" value="Idi_2"/>
    <property type="match status" value="1"/>
</dbReference>
<dbReference type="InterPro" id="IPR013785">
    <property type="entry name" value="Aldolase_TIM"/>
</dbReference>
<dbReference type="InterPro" id="IPR000262">
    <property type="entry name" value="FMN-dep_DH"/>
</dbReference>
<dbReference type="InterPro" id="IPR011179">
    <property type="entry name" value="IPdP_isomerase"/>
</dbReference>
<dbReference type="NCBIfam" id="TIGR02151">
    <property type="entry name" value="IPP_isom_2"/>
    <property type="match status" value="1"/>
</dbReference>
<dbReference type="PANTHER" id="PTHR43665">
    <property type="entry name" value="ISOPENTENYL-DIPHOSPHATE DELTA-ISOMERASE"/>
    <property type="match status" value="1"/>
</dbReference>
<dbReference type="PANTHER" id="PTHR43665:SF1">
    <property type="entry name" value="ISOPENTENYL-DIPHOSPHATE DELTA-ISOMERASE"/>
    <property type="match status" value="1"/>
</dbReference>
<dbReference type="Pfam" id="PF01070">
    <property type="entry name" value="FMN_dh"/>
    <property type="match status" value="2"/>
</dbReference>
<dbReference type="PIRSF" id="PIRSF003314">
    <property type="entry name" value="IPP_isomerase"/>
    <property type="match status" value="1"/>
</dbReference>
<dbReference type="SMART" id="SM01240">
    <property type="entry name" value="IMPDH"/>
    <property type="match status" value="1"/>
</dbReference>
<dbReference type="SUPFAM" id="SSF51395">
    <property type="entry name" value="FMN-linked oxidoreductases"/>
    <property type="match status" value="1"/>
</dbReference>
<comment type="function">
    <text evidence="1">Involved in the biosynthesis of isoprenoids. Catalyzes the 1,3-allylic rearrangement of the homoallylic substrate isopentenyl (IPP) to its allylic isomer, dimethylallyl diphosphate (DMAPP).</text>
</comment>
<comment type="catalytic activity">
    <reaction evidence="1">
        <text>isopentenyl diphosphate = dimethylallyl diphosphate</text>
        <dbReference type="Rhea" id="RHEA:23284"/>
        <dbReference type="ChEBI" id="CHEBI:57623"/>
        <dbReference type="ChEBI" id="CHEBI:128769"/>
        <dbReference type="EC" id="5.3.3.2"/>
    </reaction>
</comment>
<comment type="cofactor">
    <cofactor evidence="1">
        <name>FMN</name>
        <dbReference type="ChEBI" id="CHEBI:58210"/>
    </cofactor>
</comment>
<comment type="cofactor">
    <cofactor evidence="1">
        <name>NADPH</name>
        <dbReference type="ChEBI" id="CHEBI:57783"/>
    </cofactor>
</comment>
<comment type="cofactor">
    <cofactor evidence="1">
        <name>Mg(2+)</name>
        <dbReference type="ChEBI" id="CHEBI:18420"/>
    </cofactor>
</comment>
<comment type="subunit">
    <text evidence="1">Homooctamer. Dimer of tetramers.</text>
</comment>
<comment type="subcellular location">
    <subcellularLocation>
        <location evidence="1">Cytoplasm</location>
    </subcellularLocation>
</comment>
<comment type="similarity">
    <text evidence="1">Belongs to the IPP isomerase type 2 family.</text>
</comment>
<keyword id="KW-0963">Cytoplasm</keyword>
<keyword id="KW-0285">Flavoprotein</keyword>
<keyword id="KW-0288">FMN</keyword>
<keyword id="KW-0413">Isomerase</keyword>
<keyword id="KW-0414">Isoprene biosynthesis</keyword>
<keyword id="KW-0460">Magnesium</keyword>
<keyword id="KW-0479">Metal-binding</keyword>
<keyword id="KW-0521">NADP</keyword>
<keyword id="KW-1185">Reference proteome</keyword>
<accession>A7IAG4</accession>
<reference key="1">
    <citation type="journal article" date="2015" name="Microbiology">
        <title>Genome of Methanoregula boonei 6A8 reveals adaptations to oligotrophic peatland environments.</title>
        <authorList>
            <person name="Braeuer S."/>
            <person name="Cadillo-Quiroz H."/>
            <person name="Kyrpides N."/>
            <person name="Woyke T."/>
            <person name="Goodwin L."/>
            <person name="Detter C."/>
            <person name="Podell S."/>
            <person name="Yavitt J.B."/>
            <person name="Zinder S.H."/>
        </authorList>
    </citation>
    <scope>NUCLEOTIDE SEQUENCE [LARGE SCALE GENOMIC DNA]</scope>
    <source>
        <strain>DSM 21154 / JCM 14090 / 6A8</strain>
    </source>
</reference>
<feature type="chain" id="PRO_1000048446" description="Isopentenyl-diphosphate delta-isomerase">
    <location>
        <begin position="1"/>
        <end position="359"/>
    </location>
</feature>
<feature type="binding site" evidence="1">
    <location>
        <begin position="12"/>
        <end position="13"/>
    </location>
    <ligand>
        <name>substrate</name>
    </ligand>
</feature>
<feature type="binding site" evidence="1">
    <location>
        <position position="68"/>
    </location>
    <ligand>
        <name>FMN</name>
        <dbReference type="ChEBI" id="CHEBI:58210"/>
    </ligand>
</feature>
<feature type="binding site" evidence="1">
    <location>
        <begin position="69"/>
        <end position="71"/>
    </location>
    <ligand>
        <name>FMN</name>
        <dbReference type="ChEBI" id="CHEBI:58210"/>
    </ligand>
</feature>
<feature type="binding site" evidence="1">
    <location>
        <begin position="99"/>
        <end position="101"/>
    </location>
    <ligand>
        <name>substrate</name>
    </ligand>
</feature>
<feature type="binding site" evidence="1">
    <location>
        <position position="99"/>
    </location>
    <ligand>
        <name>FMN</name>
        <dbReference type="ChEBI" id="CHEBI:58210"/>
    </ligand>
</feature>
<feature type="binding site" evidence="1">
    <location>
        <position position="128"/>
    </location>
    <ligand>
        <name>FMN</name>
        <dbReference type="ChEBI" id="CHEBI:58210"/>
    </ligand>
</feature>
<feature type="binding site" evidence="1">
    <location>
        <position position="162"/>
    </location>
    <ligand>
        <name>substrate</name>
    </ligand>
</feature>
<feature type="binding site" evidence="1">
    <location>
        <position position="163"/>
    </location>
    <ligand>
        <name>Mg(2+)</name>
        <dbReference type="ChEBI" id="CHEBI:18420"/>
    </ligand>
</feature>
<feature type="binding site" evidence="1">
    <location>
        <position position="194"/>
    </location>
    <ligand>
        <name>FMN</name>
        <dbReference type="ChEBI" id="CHEBI:58210"/>
    </ligand>
</feature>
<feature type="binding site" evidence="1">
    <location>
        <position position="224"/>
    </location>
    <ligand>
        <name>FMN</name>
        <dbReference type="ChEBI" id="CHEBI:58210"/>
    </ligand>
</feature>
<feature type="binding site" evidence="1">
    <location>
        <begin position="277"/>
        <end position="279"/>
    </location>
    <ligand>
        <name>FMN</name>
        <dbReference type="ChEBI" id="CHEBI:58210"/>
    </ligand>
</feature>
<feature type="binding site" evidence="1">
    <location>
        <begin position="298"/>
        <end position="299"/>
    </location>
    <ligand>
        <name>FMN</name>
        <dbReference type="ChEBI" id="CHEBI:58210"/>
    </ligand>
</feature>
<name>IDI2_METB6</name>
<organism>
    <name type="scientific">Methanoregula boonei (strain DSM 21154 / JCM 14090 / 6A8)</name>
    <dbReference type="NCBI Taxonomy" id="456442"/>
    <lineage>
        <taxon>Archaea</taxon>
        <taxon>Methanobacteriati</taxon>
        <taxon>Methanobacteriota</taxon>
        <taxon>Stenosarchaea group</taxon>
        <taxon>Methanomicrobia</taxon>
        <taxon>Methanomicrobiales</taxon>
        <taxon>Methanoregulaceae</taxon>
        <taxon>Methanoregula</taxon>
    </lineage>
</organism>
<proteinExistence type="inferred from homology"/>
<protein>
    <recommendedName>
        <fullName evidence="1">Isopentenyl-diphosphate delta-isomerase</fullName>
        <shortName evidence="1">IPP isomerase</shortName>
        <ecNumber evidence="1">5.3.3.2</ecNumber>
    </recommendedName>
    <alternativeName>
        <fullName evidence="1">Isopentenyl diphosphate:dimethylallyl diphosphate isomerase</fullName>
    </alternativeName>
    <alternativeName>
        <fullName evidence="1">Isopentenyl pyrophosphate isomerase</fullName>
    </alternativeName>
    <alternativeName>
        <fullName evidence="1">Type 2 isopentenyl diphosphate isomerase</fullName>
        <shortName evidence="1">IDI-2</shortName>
    </alternativeName>
</protein>
<sequence length="359" mass="37872">MAYNKKRFTSSRKLDHLRICAEEEVESGDAGFGDVRLVHHALPECDMRSIDLSTRFLGHTLSSPLFVSAMTGGHPGTKDANARLARIAERFGLGMGVGSQRAALENPALADTFSVVRDEAPHAFLVANLGAVQLREHGAAWAGQAIEMIGANAIAIHLNFLQEAIQPEGDLSATGCIAAIADLCAETKIPVIVKETGCGISREVARLCWSAGAAAIDIGGWGGTSWAAVESFRADRKDAQGRALKTLGEDFAGWGIPTVVSLAEVAGTGSPVIASGGIRSGIDMAKCLALGADLCGMALPLLKPALESDEALAARVETIHRELVASMFLCGAARIRDMRRARLFITGRTRQMMDDGNPA</sequence>
<gene>
    <name evidence="1" type="primary">fni</name>
    <name type="ordered locus">Mboo_2211</name>
</gene>
<evidence type="ECO:0000255" key="1">
    <source>
        <dbReference type="HAMAP-Rule" id="MF_00354"/>
    </source>
</evidence>